<evidence type="ECO:0000250" key="1">
    <source>
        <dbReference type="UniProtKB" id="P38712"/>
    </source>
</evidence>
<evidence type="ECO:0000255" key="2">
    <source>
        <dbReference type="PROSITE-ProRule" id="PRU00541"/>
    </source>
</evidence>
<evidence type="ECO:0000255" key="3">
    <source>
        <dbReference type="PROSITE-ProRule" id="PRU00542"/>
    </source>
</evidence>
<evidence type="ECO:0000256" key="4">
    <source>
        <dbReference type="SAM" id="MobiDB-lite"/>
    </source>
</evidence>
<evidence type="ECO:0000305" key="5"/>
<keyword id="KW-0067">ATP-binding</keyword>
<keyword id="KW-0347">Helicase</keyword>
<keyword id="KW-0378">Hydrolase</keyword>
<keyword id="KW-0547">Nucleotide-binding</keyword>
<keyword id="KW-0539">Nucleus</keyword>
<keyword id="KW-1185">Reference proteome</keyword>
<keyword id="KW-0690">Ribosome biogenesis</keyword>
<keyword id="KW-0694">RNA-binding</keyword>
<keyword id="KW-0698">rRNA processing</keyword>
<protein>
    <recommendedName>
        <fullName evidence="5">ATP-dependent rRNA helicase RRP3</fullName>
        <ecNumber evidence="1">3.6.4.13</ecNumber>
    </recommendedName>
</protein>
<reference key="1">
    <citation type="journal article" date="2009" name="Genome Res.">
        <title>Comparative genomic analyses of the human fungal pathogens Coccidioides and their relatives.</title>
        <authorList>
            <person name="Sharpton T.J."/>
            <person name="Stajich J.E."/>
            <person name="Rounsley S.D."/>
            <person name="Gardner M.J."/>
            <person name="Wortman J.R."/>
            <person name="Jordar V.S."/>
            <person name="Maiti R."/>
            <person name="Kodira C.D."/>
            <person name="Neafsey D.E."/>
            <person name="Zeng Q."/>
            <person name="Hung C.-Y."/>
            <person name="McMahan C."/>
            <person name="Muszewska A."/>
            <person name="Grynberg M."/>
            <person name="Mandel M.A."/>
            <person name="Kellner E.M."/>
            <person name="Barker B.M."/>
            <person name="Galgiani J.N."/>
            <person name="Orbach M.J."/>
            <person name="Kirkland T.N."/>
            <person name="Cole G.T."/>
            <person name="Henn M.R."/>
            <person name="Birren B.W."/>
            <person name="Taylor J.W."/>
        </authorList>
    </citation>
    <scope>NUCLEOTIDE SEQUENCE [LARGE SCALE GENOMIC DNA]</scope>
    <source>
        <strain>NAm1 / WU24</strain>
    </source>
</reference>
<feature type="chain" id="PRO_0000310230" description="ATP-dependent rRNA helicase RRP3">
    <location>
        <begin position="1"/>
        <end position="485"/>
    </location>
</feature>
<feature type="domain" description="Helicase ATP-binding" evidence="2">
    <location>
        <begin position="90"/>
        <end position="261"/>
    </location>
</feature>
<feature type="domain" description="Helicase C-terminal" evidence="3">
    <location>
        <begin position="285"/>
        <end position="433"/>
    </location>
</feature>
<feature type="region of interest" description="Disordered" evidence="4">
    <location>
        <begin position="1"/>
        <end position="55"/>
    </location>
</feature>
<feature type="region of interest" description="Disordered" evidence="4">
    <location>
        <begin position="449"/>
        <end position="485"/>
    </location>
</feature>
<feature type="short sequence motif" description="Q motif" evidence="5">
    <location>
        <begin position="59"/>
        <end position="87"/>
    </location>
</feature>
<feature type="short sequence motif" description="DEAD box" evidence="5">
    <location>
        <begin position="209"/>
        <end position="212"/>
    </location>
</feature>
<feature type="compositionally biased region" description="Basic residues" evidence="4">
    <location>
        <begin position="1"/>
        <end position="10"/>
    </location>
</feature>
<feature type="compositionally biased region" description="Low complexity" evidence="4">
    <location>
        <begin position="20"/>
        <end position="32"/>
    </location>
</feature>
<feature type="compositionally biased region" description="Basic and acidic residues" evidence="4">
    <location>
        <begin position="449"/>
        <end position="458"/>
    </location>
</feature>
<feature type="compositionally biased region" description="Basic residues" evidence="4">
    <location>
        <begin position="465"/>
        <end position="474"/>
    </location>
</feature>
<feature type="compositionally biased region" description="Basic and acidic residues" evidence="4">
    <location>
        <begin position="475"/>
        <end position="485"/>
    </location>
</feature>
<feature type="binding site" evidence="2">
    <location>
        <begin position="103"/>
        <end position="110"/>
    </location>
    <ligand>
        <name>ATP</name>
        <dbReference type="ChEBI" id="CHEBI:30616"/>
    </ligand>
</feature>
<sequence length="485" mass="53452">MPVLKKRKLAHTAQPDPIVSDLESSSSEASQQSHDEQLTAANEQDDESPQVQREEAVTKSFKDLGIIDSLCEACEALGYKSPTPIQAESIPLALQGRDLIGLAETGSGKTAAFALPILQALMNKPQSLFGLILAPTRELACQISEAFEALGSLISVRCAVIVGGMDMVSQAISLGKKPHIIVATPGRLLDHLENTKGFSLRSLKYLVMDEADRLLDLDFGPILDKILKVLPRERRTYLFSATMSSKVESLQRASLSNPLRVSISSNKYQTVATLLQSYLFIPHKYKDIYLVYLLNEYAGQSAIVFTRTVNETQRLAILLRALGFGSIPLHGQLSQSSRLGALSKFRSRSRDILVATDVAARGLDIPSVDVVLNFDLPSDSKTYIHRVGRTARAGKSGHAFSIVTQYDIEVWLRIENALGKKLDEYKVEKEEVMVLSDRVGEAQRHAITEMKDLHEKRGSRGATLKGRRPAKGAKRGRDEMDREEG</sequence>
<dbReference type="EC" id="3.6.4.13" evidence="1"/>
<dbReference type="EMBL" id="CH476655">
    <property type="protein sequence ID" value="EDN02199.1"/>
    <property type="molecule type" value="Genomic_DNA"/>
</dbReference>
<dbReference type="SMR" id="A6QRQ7"/>
<dbReference type="STRING" id="339724.A6QRQ7"/>
<dbReference type="KEGG" id="aje:HCAG_00063"/>
<dbReference type="VEuPathDB" id="FungiDB:HCAG_00063"/>
<dbReference type="HOGENOM" id="CLU_003041_1_1_1"/>
<dbReference type="OMA" id="GIGIKCC"/>
<dbReference type="OrthoDB" id="5660at299071"/>
<dbReference type="Proteomes" id="UP000009297">
    <property type="component" value="Unassembled WGS sequence"/>
</dbReference>
<dbReference type="GO" id="GO:0005829">
    <property type="term" value="C:cytosol"/>
    <property type="evidence" value="ECO:0007669"/>
    <property type="project" value="TreeGrafter"/>
</dbReference>
<dbReference type="GO" id="GO:0005634">
    <property type="term" value="C:nucleus"/>
    <property type="evidence" value="ECO:0007669"/>
    <property type="project" value="UniProtKB-SubCell"/>
</dbReference>
<dbReference type="GO" id="GO:0005524">
    <property type="term" value="F:ATP binding"/>
    <property type="evidence" value="ECO:0007669"/>
    <property type="project" value="UniProtKB-KW"/>
</dbReference>
<dbReference type="GO" id="GO:0016887">
    <property type="term" value="F:ATP hydrolysis activity"/>
    <property type="evidence" value="ECO:0007669"/>
    <property type="project" value="RHEA"/>
</dbReference>
<dbReference type="GO" id="GO:0003723">
    <property type="term" value="F:RNA binding"/>
    <property type="evidence" value="ECO:0007669"/>
    <property type="project" value="UniProtKB-KW"/>
</dbReference>
<dbReference type="GO" id="GO:0003724">
    <property type="term" value="F:RNA helicase activity"/>
    <property type="evidence" value="ECO:0007669"/>
    <property type="project" value="UniProtKB-EC"/>
</dbReference>
<dbReference type="GO" id="GO:0006364">
    <property type="term" value="P:rRNA processing"/>
    <property type="evidence" value="ECO:0007669"/>
    <property type="project" value="UniProtKB-KW"/>
</dbReference>
<dbReference type="CDD" id="cd17954">
    <property type="entry name" value="DEADc_DDX47"/>
    <property type="match status" value="1"/>
</dbReference>
<dbReference type="CDD" id="cd18787">
    <property type="entry name" value="SF2_C_DEAD"/>
    <property type="match status" value="1"/>
</dbReference>
<dbReference type="Gene3D" id="3.40.50.300">
    <property type="entry name" value="P-loop containing nucleotide triphosphate hydrolases"/>
    <property type="match status" value="2"/>
</dbReference>
<dbReference type="InterPro" id="IPR044765">
    <property type="entry name" value="DDX47/Rrp3_DEADc"/>
</dbReference>
<dbReference type="InterPro" id="IPR011545">
    <property type="entry name" value="DEAD/DEAH_box_helicase_dom"/>
</dbReference>
<dbReference type="InterPro" id="IPR050079">
    <property type="entry name" value="DEAD_box_RNA_helicase"/>
</dbReference>
<dbReference type="InterPro" id="IPR014001">
    <property type="entry name" value="Helicase_ATP-bd"/>
</dbReference>
<dbReference type="InterPro" id="IPR001650">
    <property type="entry name" value="Helicase_C-like"/>
</dbReference>
<dbReference type="InterPro" id="IPR027417">
    <property type="entry name" value="P-loop_NTPase"/>
</dbReference>
<dbReference type="InterPro" id="IPR000629">
    <property type="entry name" value="RNA-helicase_DEAD-box_CS"/>
</dbReference>
<dbReference type="InterPro" id="IPR014014">
    <property type="entry name" value="RNA_helicase_DEAD_Q_motif"/>
</dbReference>
<dbReference type="PANTHER" id="PTHR47959">
    <property type="entry name" value="ATP-DEPENDENT RNA HELICASE RHLE-RELATED"/>
    <property type="match status" value="1"/>
</dbReference>
<dbReference type="PANTHER" id="PTHR47959:SF20">
    <property type="entry name" value="RNA HELICASE"/>
    <property type="match status" value="1"/>
</dbReference>
<dbReference type="Pfam" id="PF00270">
    <property type="entry name" value="DEAD"/>
    <property type="match status" value="1"/>
</dbReference>
<dbReference type="Pfam" id="PF00271">
    <property type="entry name" value="Helicase_C"/>
    <property type="match status" value="1"/>
</dbReference>
<dbReference type="SMART" id="SM00487">
    <property type="entry name" value="DEXDc"/>
    <property type="match status" value="1"/>
</dbReference>
<dbReference type="SMART" id="SM00490">
    <property type="entry name" value="HELICc"/>
    <property type="match status" value="1"/>
</dbReference>
<dbReference type="SUPFAM" id="SSF52540">
    <property type="entry name" value="P-loop containing nucleoside triphosphate hydrolases"/>
    <property type="match status" value="1"/>
</dbReference>
<dbReference type="PROSITE" id="PS00039">
    <property type="entry name" value="DEAD_ATP_HELICASE"/>
    <property type="match status" value="1"/>
</dbReference>
<dbReference type="PROSITE" id="PS51192">
    <property type="entry name" value="HELICASE_ATP_BIND_1"/>
    <property type="match status" value="1"/>
</dbReference>
<dbReference type="PROSITE" id="PS51194">
    <property type="entry name" value="HELICASE_CTER"/>
    <property type="match status" value="1"/>
</dbReference>
<dbReference type="PROSITE" id="PS51195">
    <property type="entry name" value="Q_MOTIF"/>
    <property type="match status" value="1"/>
</dbReference>
<accession>A6QRQ7</accession>
<proteinExistence type="inferred from homology"/>
<gene>
    <name evidence="1" type="primary">RRP3</name>
    <name type="ORF">HCAG_00063</name>
</gene>
<organism>
    <name type="scientific">Ajellomyces capsulatus (strain NAm1 / WU24)</name>
    <name type="common">Darling's disease fungus</name>
    <name type="synonym">Histoplasma capsulatum</name>
    <dbReference type="NCBI Taxonomy" id="2059318"/>
    <lineage>
        <taxon>Eukaryota</taxon>
        <taxon>Fungi</taxon>
        <taxon>Dikarya</taxon>
        <taxon>Ascomycota</taxon>
        <taxon>Pezizomycotina</taxon>
        <taxon>Eurotiomycetes</taxon>
        <taxon>Eurotiomycetidae</taxon>
        <taxon>Onygenales</taxon>
        <taxon>Ajellomycetaceae</taxon>
        <taxon>Histoplasma</taxon>
    </lineage>
</organism>
<comment type="function">
    <text evidence="1">ATP-dependent rRNA helicase required for pre-ribosomal RNA processing. Involved in the maturation of the 35S-pre-rRNA and to its cleavage to mature 18S rRNA.</text>
</comment>
<comment type="catalytic activity">
    <reaction evidence="1">
        <text>ATP + H2O = ADP + phosphate + H(+)</text>
        <dbReference type="Rhea" id="RHEA:13065"/>
        <dbReference type="ChEBI" id="CHEBI:15377"/>
        <dbReference type="ChEBI" id="CHEBI:15378"/>
        <dbReference type="ChEBI" id="CHEBI:30616"/>
        <dbReference type="ChEBI" id="CHEBI:43474"/>
        <dbReference type="ChEBI" id="CHEBI:456216"/>
        <dbReference type="EC" id="3.6.4.13"/>
    </reaction>
</comment>
<comment type="subunit">
    <text evidence="1">Interacts with the SSU processome.</text>
</comment>
<comment type="subcellular location">
    <subcellularLocation>
        <location evidence="5">Nucleus</location>
    </subcellularLocation>
</comment>
<comment type="domain">
    <text evidence="5">The Q motif is unique to and characteristic of the DEAD box family of RNA helicases and controls ATP binding and hydrolysis.</text>
</comment>
<comment type="similarity">
    <text evidence="5">Belongs to the DEAD box helicase family. DDX47/RRP3 subfamily.</text>
</comment>
<name>RRP3_AJECN</name>